<accession>B1IR88</accession>
<proteinExistence type="inferred from homology"/>
<comment type="function">
    <text evidence="1">Cell wall formation. Catalyzes the transfer of a GlcNAc subunit on undecaprenyl-pyrophosphoryl-MurNAc-pentapeptide (lipid intermediate I) to form undecaprenyl-pyrophosphoryl-MurNAc-(pentapeptide)GlcNAc (lipid intermediate II).</text>
</comment>
<comment type="catalytic activity">
    <reaction evidence="1">
        <text>di-trans,octa-cis-undecaprenyl diphospho-N-acetyl-alpha-D-muramoyl-L-alanyl-D-glutamyl-meso-2,6-diaminopimeloyl-D-alanyl-D-alanine + UDP-N-acetyl-alpha-D-glucosamine = di-trans,octa-cis-undecaprenyl diphospho-[N-acetyl-alpha-D-glucosaminyl-(1-&gt;4)]-N-acetyl-alpha-D-muramoyl-L-alanyl-D-glutamyl-meso-2,6-diaminopimeloyl-D-alanyl-D-alanine + UDP + H(+)</text>
        <dbReference type="Rhea" id="RHEA:31227"/>
        <dbReference type="ChEBI" id="CHEBI:15378"/>
        <dbReference type="ChEBI" id="CHEBI:57705"/>
        <dbReference type="ChEBI" id="CHEBI:58223"/>
        <dbReference type="ChEBI" id="CHEBI:61387"/>
        <dbReference type="ChEBI" id="CHEBI:61388"/>
        <dbReference type="EC" id="2.4.1.227"/>
    </reaction>
</comment>
<comment type="pathway">
    <text evidence="1">Cell wall biogenesis; peptidoglycan biosynthesis.</text>
</comment>
<comment type="subcellular location">
    <subcellularLocation>
        <location evidence="1">Cell inner membrane</location>
        <topology evidence="1">Peripheral membrane protein</topology>
        <orientation evidence="1">Cytoplasmic side</orientation>
    </subcellularLocation>
</comment>
<comment type="similarity">
    <text evidence="1">Belongs to the glycosyltransferase 28 family. MurG subfamily.</text>
</comment>
<name>MURG_ECOLC</name>
<sequence>MSGQGKRLMVMAGGTGGHVFPGLAVAHHLMAQGWQVRWLGTADRMEADLVPKHGIEIDFIRISGLRGKGIKALIAAPLRIFNAWRQARAIMKAYKPDVVLGMGGYVSGPGGLAAWSLGIPVVLHEQNGIAGLTNKWLAKIATKVMQAFPGAFPNAEVVGNPVRTDVLALPLPQQRLAGREGPVRVLVVGGSQGARILNQTMPQVAAKLGDSVTIWHQSGKGSQQSVEQAYAEAGQPQHKVTEFIDDMAAAYAWADVVVCRSGALTVSEIAAAGLPALFVPFQHKDRQQYWNALPLEKAGAAKIIEQPQLSVDAVANTLAGWSRETLLTMAERARAASIPDATERVANEVSRVARA</sequence>
<reference key="1">
    <citation type="submission" date="2008-02" db="EMBL/GenBank/DDBJ databases">
        <title>Complete sequence of Escherichia coli C str. ATCC 8739.</title>
        <authorList>
            <person name="Copeland A."/>
            <person name="Lucas S."/>
            <person name="Lapidus A."/>
            <person name="Glavina del Rio T."/>
            <person name="Dalin E."/>
            <person name="Tice H."/>
            <person name="Bruce D."/>
            <person name="Goodwin L."/>
            <person name="Pitluck S."/>
            <person name="Kiss H."/>
            <person name="Brettin T."/>
            <person name="Detter J.C."/>
            <person name="Han C."/>
            <person name="Kuske C.R."/>
            <person name="Schmutz J."/>
            <person name="Larimer F."/>
            <person name="Land M."/>
            <person name="Hauser L."/>
            <person name="Kyrpides N."/>
            <person name="Mikhailova N."/>
            <person name="Ingram L."/>
            <person name="Richardson P."/>
        </authorList>
    </citation>
    <scope>NUCLEOTIDE SEQUENCE [LARGE SCALE GENOMIC DNA]</scope>
    <source>
        <strain>ATCC 8739 / DSM 1576 / NBRC 3972 / NCIMB 8545 / WDCM 00012 / Crooks</strain>
    </source>
</reference>
<keyword id="KW-0131">Cell cycle</keyword>
<keyword id="KW-0132">Cell division</keyword>
<keyword id="KW-0997">Cell inner membrane</keyword>
<keyword id="KW-1003">Cell membrane</keyword>
<keyword id="KW-0133">Cell shape</keyword>
<keyword id="KW-0961">Cell wall biogenesis/degradation</keyword>
<keyword id="KW-0328">Glycosyltransferase</keyword>
<keyword id="KW-0472">Membrane</keyword>
<keyword id="KW-0573">Peptidoglycan synthesis</keyword>
<keyword id="KW-0808">Transferase</keyword>
<dbReference type="EC" id="2.4.1.227" evidence="1"/>
<dbReference type="EMBL" id="CP000946">
    <property type="protein sequence ID" value="ACA79181.1"/>
    <property type="molecule type" value="Genomic_DNA"/>
</dbReference>
<dbReference type="RefSeq" id="WP_000016560.1">
    <property type="nucleotide sequence ID" value="NZ_MTFT01000035.1"/>
</dbReference>
<dbReference type="SMR" id="B1IR88"/>
<dbReference type="CAZy" id="GT28">
    <property type="family name" value="Glycosyltransferase Family 28"/>
</dbReference>
<dbReference type="KEGG" id="ecl:EcolC_3567"/>
<dbReference type="HOGENOM" id="CLU_037404_2_0_6"/>
<dbReference type="UniPathway" id="UPA00219"/>
<dbReference type="GO" id="GO:0005886">
    <property type="term" value="C:plasma membrane"/>
    <property type="evidence" value="ECO:0007669"/>
    <property type="project" value="UniProtKB-SubCell"/>
</dbReference>
<dbReference type="GO" id="GO:0051991">
    <property type="term" value="F:UDP-N-acetyl-D-glucosamine:N-acetylmuramoyl-L-alanyl-D-glutamyl-meso-2,6-diaminopimelyl-D-alanyl-D-alanine-diphosphoundecaprenol 4-beta-N-acetylglucosaminlytransferase activity"/>
    <property type="evidence" value="ECO:0007669"/>
    <property type="project" value="RHEA"/>
</dbReference>
<dbReference type="GO" id="GO:0050511">
    <property type="term" value="F:undecaprenyldiphospho-muramoylpentapeptide beta-N-acetylglucosaminyltransferase activity"/>
    <property type="evidence" value="ECO:0007669"/>
    <property type="project" value="UniProtKB-UniRule"/>
</dbReference>
<dbReference type="GO" id="GO:0005975">
    <property type="term" value="P:carbohydrate metabolic process"/>
    <property type="evidence" value="ECO:0007669"/>
    <property type="project" value="InterPro"/>
</dbReference>
<dbReference type="GO" id="GO:0051301">
    <property type="term" value="P:cell division"/>
    <property type="evidence" value="ECO:0007669"/>
    <property type="project" value="UniProtKB-KW"/>
</dbReference>
<dbReference type="GO" id="GO:0071555">
    <property type="term" value="P:cell wall organization"/>
    <property type="evidence" value="ECO:0007669"/>
    <property type="project" value="UniProtKB-KW"/>
</dbReference>
<dbReference type="GO" id="GO:0030259">
    <property type="term" value="P:lipid glycosylation"/>
    <property type="evidence" value="ECO:0007669"/>
    <property type="project" value="UniProtKB-UniRule"/>
</dbReference>
<dbReference type="GO" id="GO:0009252">
    <property type="term" value="P:peptidoglycan biosynthetic process"/>
    <property type="evidence" value="ECO:0007669"/>
    <property type="project" value="UniProtKB-UniRule"/>
</dbReference>
<dbReference type="GO" id="GO:0008360">
    <property type="term" value="P:regulation of cell shape"/>
    <property type="evidence" value="ECO:0007669"/>
    <property type="project" value="UniProtKB-KW"/>
</dbReference>
<dbReference type="CDD" id="cd03785">
    <property type="entry name" value="GT28_MurG"/>
    <property type="match status" value="1"/>
</dbReference>
<dbReference type="FunFam" id="3.40.50.2000:FF:000016">
    <property type="entry name" value="UDP-N-acetylglucosamine--N-acetylmuramyl-(pentapeptide) pyrophosphoryl-undecaprenol N-acetylglucosamine transferase"/>
    <property type="match status" value="1"/>
</dbReference>
<dbReference type="FunFam" id="3.40.50.2000:FF:000018">
    <property type="entry name" value="UDP-N-acetylglucosamine--N-acetylmuramyl-(pentapeptide) pyrophosphoryl-undecaprenol N-acetylglucosamine transferase"/>
    <property type="match status" value="1"/>
</dbReference>
<dbReference type="Gene3D" id="3.40.50.2000">
    <property type="entry name" value="Glycogen Phosphorylase B"/>
    <property type="match status" value="2"/>
</dbReference>
<dbReference type="HAMAP" id="MF_00033">
    <property type="entry name" value="MurG"/>
    <property type="match status" value="1"/>
</dbReference>
<dbReference type="InterPro" id="IPR006009">
    <property type="entry name" value="GlcNAc_MurG"/>
</dbReference>
<dbReference type="InterPro" id="IPR007235">
    <property type="entry name" value="Glyco_trans_28_C"/>
</dbReference>
<dbReference type="InterPro" id="IPR004276">
    <property type="entry name" value="GlycoTrans_28_N"/>
</dbReference>
<dbReference type="NCBIfam" id="TIGR01133">
    <property type="entry name" value="murG"/>
    <property type="match status" value="1"/>
</dbReference>
<dbReference type="PANTHER" id="PTHR21015:SF22">
    <property type="entry name" value="GLYCOSYLTRANSFERASE"/>
    <property type="match status" value="1"/>
</dbReference>
<dbReference type="PANTHER" id="PTHR21015">
    <property type="entry name" value="UDP-N-ACETYLGLUCOSAMINE--N-ACETYLMURAMYL-(PENTAPEPTIDE) PYROPHOSPHORYL-UNDECAPRENOL N-ACETYLGLUCOSAMINE TRANSFERASE 1"/>
    <property type="match status" value="1"/>
</dbReference>
<dbReference type="Pfam" id="PF04101">
    <property type="entry name" value="Glyco_tran_28_C"/>
    <property type="match status" value="1"/>
</dbReference>
<dbReference type="Pfam" id="PF03033">
    <property type="entry name" value="Glyco_transf_28"/>
    <property type="match status" value="1"/>
</dbReference>
<dbReference type="SUPFAM" id="SSF53756">
    <property type="entry name" value="UDP-Glycosyltransferase/glycogen phosphorylase"/>
    <property type="match status" value="1"/>
</dbReference>
<gene>
    <name evidence="1" type="primary">murG</name>
    <name type="ordered locus">EcolC_3567</name>
</gene>
<organism>
    <name type="scientific">Escherichia coli (strain ATCC 8739 / DSM 1576 / NBRC 3972 / NCIMB 8545 / WDCM 00012 / Crooks)</name>
    <dbReference type="NCBI Taxonomy" id="481805"/>
    <lineage>
        <taxon>Bacteria</taxon>
        <taxon>Pseudomonadati</taxon>
        <taxon>Pseudomonadota</taxon>
        <taxon>Gammaproteobacteria</taxon>
        <taxon>Enterobacterales</taxon>
        <taxon>Enterobacteriaceae</taxon>
        <taxon>Escherichia</taxon>
    </lineage>
</organism>
<feature type="chain" id="PRO_1000074457" description="UDP-N-acetylglucosamine--N-acetylmuramyl-(pentapeptide) pyrophosphoryl-undecaprenol N-acetylglucosamine transferase">
    <location>
        <begin position="1"/>
        <end position="355"/>
    </location>
</feature>
<feature type="binding site" evidence="1">
    <location>
        <begin position="15"/>
        <end position="17"/>
    </location>
    <ligand>
        <name>UDP-N-acetyl-alpha-D-glucosamine</name>
        <dbReference type="ChEBI" id="CHEBI:57705"/>
    </ligand>
</feature>
<feature type="binding site" evidence="1">
    <location>
        <position position="127"/>
    </location>
    <ligand>
        <name>UDP-N-acetyl-alpha-D-glucosamine</name>
        <dbReference type="ChEBI" id="CHEBI:57705"/>
    </ligand>
</feature>
<feature type="binding site" evidence="1">
    <location>
        <position position="163"/>
    </location>
    <ligand>
        <name>UDP-N-acetyl-alpha-D-glucosamine</name>
        <dbReference type="ChEBI" id="CHEBI:57705"/>
    </ligand>
</feature>
<feature type="binding site" evidence="1">
    <location>
        <position position="191"/>
    </location>
    <ligand>
        <name>UDP-N-acetyl-alpha-D-glucosamine</name>
        <dbReference type="ChEBI" id="CHEBI:57705"/>
    </ligand>
</feature>
<feature type="binding site" evidence="1">
    <location>
        <position position="244"/>
    </location>
    <ligand>
        <name>UDP-N-acetyl-alpha-D-glucosamine</name>
        <dbReference type="ChEBI" id="CHEBI:57705"/>
    </ligand>
</feature>
<feature type="binding site" evidence="1">
    <location>
        <begin position="263"/>
        <end position="268"/>
    </location>
    <ligand>
        <name>UDP-N-acetyl-alpha-D-glucosamine</name>
        <dbReference type="ChEBI" id="CHEBI:57705"/>
    </ligand>
</feature>
<feature type="binding site" evidence="1">
    <location>
        <position position="288"/>
    </location>
    <ligand>
        <name>UDP-N-acetyl-alpha-D-glucosamine</name>
        <dbReference type="ChEBI" id="CHEBI:57705"/>
    </ligand>
</feature>
<evidence type="ECO:0000255" key="1">
    <source>
        <dbReference type="HAMAP-Rule" id="MF_00033"/>
    </source>
</evidence>
<protein>
    <recommendedName>
        <fullName evidence="1">UDP-N-acetylglucosamine--N-acetylmuramyl-(pentapeptide) pyrophosphoryl-undecaprenol N-acetylglucosamine transferase</fullName>
        <ecNumber evidence="1">2.4.1.227</ecNumber>
    </recommendedName>
    <alternativeName>
        <fullName evidence="1">Undecaprenyl-PP-MurNAc-pentapeptide-UDPGlcNAc GlcNAc transferase</fullName>
    </alternativeName>
</protein>